<feature type="chain" id="PRO_0000058938" description="Tumor necrosis factor receptor superfamily member 27">
    <location>
        <begin position="1"/>
        <end position="297"/>
    </location>
</feature>
<feature type="topological domain" description="Extracellular" evidence="1">
    <location>
        <begin position="1"/>
        <end position="138"/>
    </location>
</feature>
<feature type="transmembrane region" description="Helical; Signal-anchor for type III membrane protein" evidence="1">
    <location>
        <begin position="139"/>
        <end position="159"/>
    </location>
</feature>
<feature type="topological domain" description="Cytoplasmic" evidence="1">
    <location>
        <begin position="160"/>
        <end position="297"/>
    </location>
</feature>
<feature type="repeat" description="TNFR-Cys 1">
    <location>
        <begin position="2"/>
        <end position="41"/>
    </location>
</feature>
<feature type="repeat" description="TNFR-Cys 2">
    <location>
        <begin position="43"/>
        <end position="83"/>
    </location>
</feature>
<feature type="repeat" description="TNFR-Cys 3">
    <location>
        <begin position="85"/>
        <end position="118"/>
    </location>
</feature>
<feature type="region of interest" description="Disordered" evidence="3">
    <location>
        <begin position="272"/>
        <end position="297"/>
    </location>
</feature>
<feature type="compositionally biased region" description="Polar residues" evidence="3">
    <location>
        <begin position="272"/>
        <end position="281"/>
    </location>
</feature>
<feature type="glycosylation site" description="N-linked (GlcNAc...) asparagine" evidence="1">
    <location>
        <position position="74"/>
    </location>
</feature>
<feature type="disulfide bond" evidence="2">
    <location>
        <begin position="3"/>
        <end position="15"/>
    </location>
</feature>
<feature type="disulfide bond" evidence="2">
    <location>
        <begin position="18"/>
        <end position="31"/>
    </location>
</feature>
<feature type="disulfide bond" evidence="2">
    <location>
        <begin position="21"/>
        <end position="41"/>
    </location>
</feature>
<feature type="disulfide bond" evidence="2">
    <location>
        <begin position="44"/>
        <end position="58"/>
    </location>
</feature>
<feature type="disulfide bond" evidence="2">
    <location>
        <begin position="61"/>
        <end position="75"/>
    </location>
</feature>
<feature type="disulfide bond" evidence="2">
    <location>
        <begin position="64"/>
        <end position="83"/>
    </location>
</feature>
<feature type="disulfide bond" evidence="2">
    <location>
        <begin position="86"/>
        <end position="104"/>
    </location>
</feature>
<feature type="disulfide bond" evidence="2">
    <location>
        <begin position="107"/>
        <end position="118"/>
    </location>
</feature>
<feature type="splice variant" id="VSP_011568" description="In isoform 2." evidence="8">
    <original>R</original>
    <variation>REKLIIFSDPVPASLNLIPEFA</variation>
    <location>
        <position position="172"/>
    </location>
</feature>
<feature type="splice variant" id="VSP_011569" description="In isoform 3." evidence="9">
    <original>R</original>
    <variation>RVT</variation>
    <location>
        <position position="172"/>
    </location>
</feature>
<feature type="sequence variant" id="VAR_044511" description="In dbSNP:rs1385699.">
    <original>R</original>
    <variation>K</variation>
    <location>
        <position position="57"/>
    </location>
</feature>
<feature type="sequence variant" id="VAR_044512" description="In dbSNP:rs1385698." evidence="4 5 6 7">
    <original>T</original>
    <variation>A</variation>
    <location>
        <position position="129"/>
    </location>
</feature>
<feature type="mutagenesis site" description="Abolishes TRAF6 association." evidence="4">
    <original>E</original>
    <variation>R</variation>
    <location>
        <position position="256"/>
    </location>
</feature>
<feature type="sequence conflict" description="In Ref. 2; AAN73210." evidence="10" ref="2">
    <original>M</original>
    <variation>V</variation>
    <location>
        <position position="236"/>
    </location>
</feature>
<name>TNR27_HUMAN</name>
<dbReference type="EMBL" id="AF298812">
    <property type="protein sequence ID" value="AAG28761.1"/>
    <property type="molecule type" value="mRNA"/>
</dbReference>
<dbReference type="EMBL" id="AY152724">
    <property type="protein sequence ID" value="AAN73210.1"/>
    <property type="molecule type" value="mRNA"/>
</dbReference>
<dbReference type="EMBL" id="AY358735">
    <property type="protein sequence ID" value="AAQ89952.1"/>
    <property type="molecule type" value="mRNA"/>
</dbReference>
<dbReference type="EMBL" id="AY358736">
    <property type="protein sequence ID" value="AAQ89953.1"/>
    <property type="molecule type" value="mRNA"/>
</dbReference>
<dbReference type="EMBL" id="AL353136">
    <property type="status" value="NOT_ANNOTATED_CDS"/>
    <property type="molecule type" value="Genomic_DNA"/>
</dbReference>
<dbReference type="EMBL" id="BC034919">
    <property type="protein sequence ID" value="AAH34919.1"/>
    <property type="molecule type" value="mRNA"/>
</dbReference>
<dbReference type="CCDS" id="CCDS14386.1">
    <molecule id="Q9HAV5-1"/>
</dbReference>
<dbReference type="CCDS" id="CCDS56603.1">
    <molecule id="Q9HAV5-2"/>
</dbReference>
<dbReference type="RefSeq" id="NP_001186616.2">
    <molecule id="Q9HAV5-1"/>
    <property type="nucleotide sequence ID" value="NM_001199687.3"/>
</dbReference>
<dbReference type="RefSeq" id="NP_001229239.1">
    <property type="nucleotide sequence ID" value="NM_001242310.1"/>
</dbReference>
<dbReference type="RefSeq" id="NP_001311130.1">
    <property type="nucleotide sequence ID" value="NM_001324201.1"/>
</dbReference>
<dbReference type="RefSeq" id="NP_001311133.1">
    <property type="nucleotide sequence ID" value="NM_001324204.1"/>
</dbReference>
<dbReference type="RefSeq" id="NP_001311134.1">
    <property type="nucleotide sequence ID" value="NM_001324205.1"/>
</dbReference>
<dbReference type="RefSeq" id="NP_001311135.1">
    <property type="nucleotide sequence ID" value="NM_001324206.1"/>
</dbReference>
<dbReference type="RefSeq" id="NP_068555.2">
    <molecule id="Q9HAV5-1"/>
    <property type="nucleotide sequence ID" value="NM_021783.5"/>
</dbReference>
<dbReference type="RefSeq" id="XP_011529302.1">
    <property type="nucleotide sequence ID" value="XM_011531000.1"/>
</dbReference>
<dbReference type="RefSeq" id="XP_011529303.1">
    <molecule id="Q9HAV5-2"/>
    <property type="nucleotide sequence ID" value="XM_011531001.2"/>
</dbReference>
<dbReference type="RefSeq" id="XP_047298252.1">
    <molecule id="Q9HAV5-2"/>
    <property type="nucleotide sequence ID" value="XM_047442296.1"/>
</dbReference>
<dbReference type="BioGRID" id="121904">
    <property type="interactions" value="35"/>
</dbReference>
<dbReference type="FunCoup" id="Q9HAV5">
    <property type="interactions" value="765"/>
</dbReference>
<dbReference type="IntAct" id="Q9HAV5">
    <property type="interactions" value="23"/>
</dbReference>
<dbReference type="STRING" id="9606.ENSP00000379365"/>
<dbReference type="GlyCosmos" id="Q9HAV5">
    <property type="glycosylation" value="1 site, No reported glycans"/>
</dbReference>
<dbReference type="GlyGen" id="Q9HAV5">
    <property type="glycosylation" value="1 site, 1 N-linked glycan (1 site)"/>
</dbReference>
<dbReference type="iPTMnet" id="Q9HAV5"/>
<dbReference type="PhosphoSitePlus" id="Q9HAV5"/>
<dbReference type="BioMuta" id="EDA2R"/>
<dbReference type="DMDM" id="313104030"/>
<dbReference type="jPOST" id="Q9HAV5"/>
<dbReference type="MassIVE" id="Q9HAV5"/>
<dbReference type="PaxDb" id="9606-ENSP00000379365"/>
<dbReference type="PeptideAtlas" id="Q9HAV5"/>
<dbReference type="ProteomicsDB" id="81446">
    <molecule id="Q9HAV5-1"/>
</dbReference>
<dbReference type="ProteomicsDB" id="81447">
    <molecule id="Q9HAV5-2"/>
</dbReference>
<dbReference type="ProteomicsDB" id="81448">
    <molecule id="Q9HAV5-3"/>
</dbReference>
<dbReference type="Antibodypedia" id="3374">
    <property type="antibodies" value="336 antibodies from 32 providers"/>
</dbReference>
<dbReference type="DNASU" id="60401"/>
<dbReference type="Ensembl" id="ENST00000253392.5">
    <molecule id="Q9HAV5-2"/>
    <property type="protein sequence ID" value="ENSP00000253392.5"/>
    <property type="gene ID" value="ENSG00000131080.15"/>
</dbReference>
<dbReference type="Ensembl" id="ENST00000374719.8">
    <molecule id="Q9HAV5-1"/>
    <property type="protein sequence ID" value="ENSP00000363851.3"/>
    <property type="gene ID" value="ENSG00000131080.15"/>
</dbReference>
<dbReference type="Ensembl" id="ENST00000396050.5">
    <molecule id="Q9HAV5-2"/>
    <property type="protein sequence ID" value="ENSP00000379365.2"/>
    <property type="gene ID" value="ENSG00000131080.15"/>
</dbReference>
<dbReference type="Ensembl" id="ENST00000451436.6">
    <molecule id="Q9HAV5-1"/>
    <property type="protein sequence ID" value="ENSP00000415242.3"/>
    <property type="gene ID" value="ENSG00000131080.15"/>
</dbReference>
<dbReference type="GeneID" id="60401"/>
<dbReference type="KEGG" id="hsa:60401"/>
<dbReference type="MANE-Select" id="ENST00000374719.8">
    <property type="protein sequence ID" value="ENSP00000363851.3"/>
    <property type="RefSeq nucleotide sequence ID" value="NM_021783.5"/>
    <property type="RefSeq protein sequence ID" value="NP_068555.2"/>
</dbReference>
<dbReference type="UCSC" id="uc004dwq.4">
    <molecule id="Q9HAV5-1"/>
    <property type="organism name" value="human"/>
</dbReference>
<dbReference type="AGR" id="HGNC:17756"/>
<dbReference type="CTD" id="60401"/>
<dbReference type="DisGeNET" id="60401"/>
<dbReference type="GeneCards" id="EDA2R"/>
<dbReference type="HGNC" id="HGNC:17756">
    <property type="gene designation" value="EDA2R"/>
</dbReference>
<dbReference type="HPA" id="ENSG00000131080">
    <property type="expression patterns" value="Low tissue specificity"/>
</dbReference>
<dbReference type="MalaCards" id="EDA2R"/>
<dbReference type="MIM" id="300276">
    <property type="type" value="gene"/>
</dbReference>
<dbReference type="neXtProt" id="NX_Q9HAV5"/>
<dbReference type="OpenTargets" id="ENSG00000131080"/>
<dbReference type="Orphanet" id="181">
    <property type="disease" value="X-linked hypohidrotic ectodermal dysplasia"/>
</dbReference>
<dbReference type="PharmGKB" id="PA134974675"/>
<dbReference type="VEuPathDB" id="HostDB:ENSG00000131080"/>
<dbReference type="eggNOG" id="ENOG502S069">
    <property type="taxonomic scope" value="Eukaryota"/>
</dbReference>
<dbReference type="GeneTree" id="ENSGT00940000153259"/>
<dbReference type="HOGENOM" id="CLU_041149_0_0_1"/>
<dbReference type="InParanoid" id="Q9HAV5"/>
<dbReference type="OMA" id="FAIIYCK"/>
<dbReference type="OrthoDB" id="10017617at2759"/>
<dbReference type="PAN-GO" id="Q9HAV5">
    <property type="GO annotations" value="4 GO annotations based on evolutionary models"/>
</dbReference>
<dbReference type="PhylomeDB" id="Q9HAV5"/>
<dbReference type="TreeFam" id="TF331385"/>
<dbReference type="PathwayCommons" id="Q9HAV5"/>
<dbReference type="Reactome" id="R-HSA-5669034">
    <property type="pathway name" value="TNFs bind their physiological receptors"/>
</dbReference>
<dbReference type="SignaLink" id="Q9HAV5"/>
<dbReference type="SIGNOR" id="Q9HAV5"/>
<dbReference type="BioGRID-ORCS" id="60401">
    <property type="hits" value="7 hits in 768 CRISPR screens"/>
</dbReference>
<dbReference type="ChiTaRS" id="EDA2R">
    <property type="organism name" value="human"/>
</dbReference>
<dbReference type="GeneWiki" id="Ectodysplasin_A2_receptor"/>
<dbReference type="GenomeRNAi" id="60401"/>
<dbReference type="Pharos" id="Q9HAV5">
    <property type="development level" value="Tbio"/>
</dbReference>
<dbReference type="PRO" id="PR:Q9HAV5"/>
<dbReference type="Proteomes" id="UP000005640">
    <property type="component" value="Chromosome X"/>
</dbReference>
<dbReference type="RNAct" id="Q9HAV5">
    <property type="molecule type" value="protein"/>
</dbReference>
<dbReference type="Bgee" id="ENSG00000131080">
    <property type="expression patterns" value="Expressed in stromal cell of endometrium and 111 other cell types or tissues"/>
</dbReference>
<dbReference type="GO" id="GO:0005886">
    <property type="term" value="C:plasma membrane"/>
    <property type="evidence" value="ECO:0000314"/>
    <property type="project" value="HGNC-UCL"/>
</dbReference>
<dbReference type="GO" id="GO:0038023">
    <property type="term" value="F:signaling receptor activity"/>
    <property type="evidence" value="ECO:0000318"/>
    <property type="project" value="GO_Central"/>
</dbReference>
<dbReference type="GO" id="GO:0004888">
    <property type="term" value="F:transmembrane signaling receptor activity"/>
    <property type="evidence" value="ECO:0000314"/>
    <property type="project" value="HGNC-UCL"/>
</dbReference>
<dbReference type="GO" id="GO:0005031">
    <property type="term" value="F:tumor necrosis factor receptor activity"/>
    <property type="evidence" value="ECO:0000303"/>
    <property type="project" value="UniProtKB"/>
</dbReference>
<dbReference type="GO" id="GO:0019221">
    <property type="term" value="P:cytokine-mediated signaling pathway"/>
    <property type="evidence" value="ECO:0000314"/>
    <property type="project" value="ARUK-UCL"/>
</dbReference>
<dbReference type="GO" id="GO:0010668">
    <property type="term" value="P:ectodermal cell differentiation"/>
    <property type="evidence" value="ECO:0000304"/>
    <property type="project" value="HGNC-UCL"/>
</dbReference>
<dbReference type="GO" id="GO:0008544">
    <property type="term" value="P:epidermis development"/>
    <property type="evidence" value="ECO:0000303"/>
    <property type="project" value="UniProtKB"/>
</dbReference>
<dbReference type="GO" id="GO:0072332">
    <property type="term" value="P:intrinsic apoptotic signaling pathway by p53 class mediator"/>
    <property type="evidence" value="ECO:0007669"/>
    <property type="project" value="Ensembl"/>
</dbReference>
<dbReference type="GO" id="GO:0043123">
    <property type="term" value="P:positive regulation of canonical NF-kappaB signal transduction"/>
    <property type="evidence" value="ECO:0000314"/>
    <property type="project" value="HGNC-UCL"/>
</dbReference>
<dbReference type="GO" id="GO:0046330">
    <property type="term" value="P:positive regulation of JNK cascade"/>
    <property type="evidence" value="ECO:0000314"/>
    <property type="project" value="HGNC-UCL"/>
</dbReference>
<dbReference type="CDD" id="cd15838">
    <property type="entry name" value="TNFRSF27"/>
    <property type="match status" value="1"/>
</dbReference>
<dbReference type="FunFam" id="2.10.50.10:FF:000003">
    <property type="entry name" value="Tumor necrosis factor receptor superfamily member 19"/>
    <property type="match status" value="1"/>
</dbReference>
<dbReference type="Gene3D" id="2.10.50.10">
    <property type="entry name" value="Tumor Necrosis Factor Receptor, subunit A, domain 2"/>
    <property type="match status" value="1"/>
</dbReference>
<dbReference type="InterPro" id="IPR001368">
    <property type="entry name" value="TNFR/NGFR_Cys_rich_reg"/>
</dbReference>
<dbReference type="InterPro" id="IPR022319">
    <property type="entry name" value="TNFR_27"/>
</dbReference>
<dbReference type="InterPro" id="IPR034060">
    <property type="entry name" value="TNFRSF27_N"/>
</dbReference>
<dbReference type="InterPro" id="IPR047526">
    <property type="entry name" value="TNR19/27/EDAR"/>
</dbReference>
<dbReference type="PANTHER" id="PTHR12120">
    <property type="entry name" value="TNFR-CYS DOMAIN-CONTAINING PROTEIN"/>
    <property type="match status" value="1"/>
</dbReference>
<dbReference type="PANTHER" id="PTHR12120:SF8">
    <property type="entry name" value="TUMOR NECROSIS FACTOR RECEPTOR SUPERFAMILY MEMBER 27"/>
    <property type="match status" value="1"/>
</dbReference>
<dbReference type="Pfam" id="PF00020">
    <property type="entry name" value="TNFR_c6"/>
    <property type="match status" value="2"/>
</dbReference>
<dbReference type="PRINTS" id="PR01973">
    <property type="entry name" value="TNFACTORR27"/>
</dbReference>
<dbReference type="SMART" id="SM00208">
    <property type="entry name" value="TNFR"/>
    <property type="match status" value="2"/>
</dbReference>
<dbReference type="SUPFAM" id="SSF57586">
    <property type="entry name" value="TNF receptor-like"/>
    <property type="match status" value="1"/>
</dbReference>
<dbReference type="PROSITE" id="PS00652">
    <property type="entry name" value="TNFR_NGFR_1"/>
    <property type="match status" value="2"/>
</dbReference>
<dbReference type="PROSITE" id="PS50050">
    <property type="entry name" value="TNFR_NGFR_2"/>
    <property type="match status" value="2"/>
</dbReference>
<accession>Q9HAV5</accession>
<accession>Q5VYX9</accession>
<accession>Q5VYY0</accession>
<accession>Q6UWM2</accession>
<accession>Q8IZA6</accession>
<evidence type="ECO:0000255" key="1"/>
<evidence type="ECO:0000255" key="2">
    <source>
        <dbReference type="PROSITE-ProRule" id="PRU00206"/>
    </source>
</evidence>
<evidence type="ECO:0000256" key="3">
    <source>
        <dbReference type="SAM" id="MobiDB-lite"/>
    </source>
</evidence>
<evidence type="ECO:0000269" key="4">
    <source>
    </source>
</evidence>
<evidence type="ECO:0000269" key="5">
    <source>
    </source>
</evidence>
<evidence type="ECO:0000269" key="6">
    <source>
    </source>
</evidence>
<evidence type="ECO:0000269" key="7">
    <source>
    </source>
</evidence>
<evidence type="ECO:0000303" key="8">
    <source>
    </source>
</evidence>
<evidence type="ECO:0000303" key="9">
    <source>
    </source>
</evidence>
<evidence type="ECO:0000305" key="10"/>
<protein>
    <recommendedName>
        <fullName>Tumor necrosis factor receptor superfamily member 27</fullName>
    </recommendedName>
    <alternativeName>
        <fullName>X-linked ectodysplasin-A2 receptor</fullName>
        <shortName>EDA-A2 receptor</shortName>
    </alternativeName>
</protein>
<gene>
    <name type="primary">EDA2R</name>
    <name type="synonym">TNFRSF27</name>
    <name type="synonym">XEDAR</name>
    <name type="ORF">UNQ2448/PRO5727/PRO34080</name>
</gene>
<reference key="1">
    <citation type="journal article" date="2000" name="Science">
        <title>Two-amino acid molecular switch in an epithelial morphogen that regulates binding to two distinct receptors.</title>
        <authorList>
            <person name="Yan M."/>
            <person name="Wang L.-C."/>
            <person name="Hymowitz S.G."/>
            <person name="Schilbach S."/>
            <person name="Lee J."/>
            <person name="Goddard A."/>
            <person name="de Vos A.M."/>
            <person name="Gao W.-Q."/>
            <person name="Dixit V.M."/>
        </authorList>
    </citation>
    <scope>NUCLEOTIDE SEQUENCE [MRNA] (ISOFORM 1)</scope>
    <scope>MUTAGENESIS OF GLU-256</scope>
    <scope>VARIANT ALA-129</scope>
    <source>
        <tissue>Fetal kidney</tissue>
    </source>
</reference>
<reference key="2">
    <citation type="journal article" date="2002" name="J. Biol. Chem.">
        <title>Role of TRAF3 and -6 in the activation of the NF-kappa B and JNK pathways by X-linked ectodermal dysplasia receptor.</title>
        <authorList>
            <person name="Sinha S.K."/>
            <person name="Zachariah S."/>
            <person name="Quinones H.I."/>
            <person name="Shindo M."/>
            <person name="Chaudhary P.M."/>
        </authorList>
    </citation>
    <scope>NUCLEOTIDE SEQUENCE [MRNA] (ISOFORM 2)</scope>
    <scope>FUNCTION</scope>
    <scope>VARIANT ALA-129</scope>
</reference>
<reference key="3">
    <citation type="journal article" date="2003" name="Genome Res.">
        <title>The secreted protein discovery initiative (SPDI), a large-scale effort to identify novel human secreted and transmembrane proteins: a bioinformatics assessment.</title>
        <authorList>
            <person name="Clark H.F."/>
            <person name="Gurney A.L."/>
            <person name="Abaya E."/>
            <person name="Baker K."/>
            <person name="Baldwin D.T."/>
            <person name="Brush J."/>
            <person name="Chen J."/>
            <person name="Chow B."/>
            <person name="Chui C."/>
            <person name="Crowley C."/>
            <person name="Currell B."/>
            <person name="Deuel B."/>
            <person name="Dowd P."/>
            <person name="Eaton D."/>
            <person name="Foster J.S."/>
            <person name="Grimaldi C."/>
            <person name="Gu Q."/>
            <person name="Hass P.E."/>
            <person name="Heldens S."/>
            <person name="Huang A."/>
            <person name="Kim H.S."/>
            <person name="Klimowski L."/>
            <person name="Jin Y."/>
            <person name="Johnson S."/>
            <person name="Lee J."/>
            <person name="Lewis L."/>
            <person name="Liao D."/>
            <person name="Mark M.R."/>
            <person name="Robbie E."/>
            <person name="Sanchez C."/>
            <person name="Schoenfeld J."/>
            <person name="Seshagiri S."/>
            <person name="Simmons L."/>
            <person name="Singh J."/>
            <person name="Smith V."/>
            <person name="Stinson J."/>
            <person name="Vagts A."/>
            <person name="Vandlen R.L."/>
            <person name="Watanabe C."/>
            <person name="Wieand D."/>
            <person name="Woods K."/>
            <person name="Xie M.-H."/>
            <person name="Yansura D.G."/>
            <person name="Yi S."/>
            <person name="Yu G."/>
            <person name="Yuan J."/>
            <person name="Zhang M."/>
            <person name="Zhang Z."/>
            <person name="Goddard A.D."/>
            <person name="Wood W.I."/>
            <person name="Godowski P.J."/>
            <person name="Gray A.M."/>
        </authorList>
    </citation>
    <scope>NUCLEOTIDE SEQUENCE [LARGE SCALE MRNA] (ISOFORMS 1 AND 3)</scope>
    <scope>VARIANT ALA-129</scope>
</reference>
<reference key="4">
    <citation type="journal article" date="2005" name="Nature">
        <title>The DNA sequence of the human X chromosome.</title>
        <authorList>
            <person name="Ross M.T."/>
            <person name="Grafham D.V."/>
            <person name="Coffey A.J."/>
            <person name="Scherer S."/>
            <person name="McLay K."/>
            <person name="Muzny D."/>
            <person name="Platzer M."/>
            <person name="Howell G.R."/>
            <person name="Burrows C."/>
            <person name="Bird C.P."/>
            <person name="Frankish A."/>
            <person name="Lovell F.L."/>
            <person name="Howe K.L."/>
            <person name="Ashurst J.L."/>
            <person name="Fulton R.S."/>
            <person name="Sudbrak R."/>
            <person name="Wen G."/>
            <person name="Jones M.C."/>
            <person name="Hurles M.E."/>
            <person name="Andrews T.D."/>
            <person name="Scott C.E."/>
            <person name="Searle S."/>
            <person name="Ramser J."/>
            <person name="Whittaker A."/>
            <person name="Deadman R."/>
            <person name="Carter N.P."/>
            <person name="Hunt S.E."/>
            <person name="Chen R."/>
            <person name="Cree A."/>
            <person name="Gunaratne P."/>
            <person name="Havlak P."/>
            <person name="Hodgson A."/>
            <person name="Metzker M.L."/>
            <person name="Richards S."/>
            <person name="Scott G."/>
            <person name="Steffen D."/>
            <person name="Sodergren E."/>
            <person name="Wheeler D.A."/>
            <person name="Worley K.C."/>
            <person name="Ainscough R."/>
            <person name="Ambrose K.D."/>
            <person name="Ansari-Lari M.A."/>
            <person name="Aradhya S."/>
            <person name="Ashwell R.I."/>
            <person name="Babbage A.K."/>
            <person name="Bagguley C.L."/>
            <person name="Ballabio A."/>
            <person name="Banerjee R."/>
            <person name="Barker G.E."/>
            <person name="Barlow K.F."/>
            <person name="Barrett I.P."/>
            <person name="Bates K.N."/>
            <person name="Beare D.M."/>
            <person name="Beasley H."/>
            <person name="Beasley O."/>
            <person name="Beck A."/>
            <person name="Bethel G."/>
            <person name="Blechschmidt K."/>
            <person name="Brady N."/>
            <person name="Bray-Allen S."/>
            <person name="Bridgeman A.M."/>
            <person name="Brown A.J."/>
            <person name="Brown M.J."/>
            <person name="Bonnin D."/>
            <person name="Bruford E.A."/>
            <person name="Buhay C."/>
            <person name="Burch P."/>
            <person name="Burford D."/>
            <person name="Burgess J."/>
            <person name="Burrill W."/>
            <person name="Burton J."/>
            <person name="Bye J.M."/>
            <person name="Carder C."/>
            <person name="Carrel L."/>
            <person name="Chako J."/>
            <person name="Chapman J.C."/>
            <person name="Chavez D."/>
            <person name="Chen E."/>
            <person name="Chen G."/>
            <person name="Chen Y."/>
            <person name="Chen Z."/>
            <person name="Chinault C."/>
            <person name="Ciccodicola A."/>
            <person name="Clark S.Y."/>
            <person name="Clarke G."/>
            <person name="Clee C.M."/>
            <person name="Clegg S."/>
            <person name="Clerc-Blankenburg K."/>
            <person name="Clifford K."/>
            <person name="Cobley V."/>
            <person name="Cole C.G."/>
            <person name="Conquer J.S."/>
            <person name="Corby N."/>
            <person name="Connor R.E."/>
            <person name="David R."/>
            <person name="Davies J."/>
            <person name="Davis C."/>
            <person name="Davis J."/>
            <person name="Delgado O."/>
            <person name="Deshazo D."/>
            <person name="Dhami P."/>
            <person name="Ding Y."/>
            <person name="Dinh H."/>
            <person name="Dodsworth S."/>
            <person name="Draper H."/>
            <person name="Dugan-Rocha S."/>
            <person name="Dunham A."/>
            <person name="Dunn M."/>
            <person name="Durbin K.J."/>
            <person name="Dutta I."/>
            <person name="Eades T."/>
            <person name="Ellwood M."/>
            <person name="Emery-Cohen A."/>
            <person name="Errington H."/>
            <person name="Evans K.L."/>
            <person name="Faulkner L."/>
            <person name="Francis F."/>
            <person name="Frankland J."/>
            <person name="Fraser A.E."/>
            <person name="Galgoczy P."/>
            <person name="Gilbert J."/>
            <person name="Gill R."/>
            <person name="Gloeckner G."/>
            <person name="Gregory S.G."/>
            <person name="Gribble S."/>
            <person name="Griffiths C."/>
            <person name="Grocock R."/>
            <person name="Gu Y."/>
            <person name="Gwilliam R."/>
            <person name="Hamilton C."/>
            <person name="Hart E.A."/>
            <person name="Hawes A."/>
            <person name="Heath P.D."/>
            <person name="Heitmann K."/>
            <person name="Hennig S."/>
            <person name="Hernandez J."/>
            <person name="Hinzmann B."/>
            <person name="Ho S."/>
            <person name="Hoffs M."/>
            <person name="Howden P.J."/>
            <person name="Huckle E.J."/>
            <person name="Hume J."/>
            <person name="Hunt P.J."/>
            <person name="Hunt A.R."/>
            <person name="Isherwood J."/>
            <person name="Jacob L."/>
            <person name="Johnson D."/>
            <person name="Jones S."/>
            <person name="de Jong P.J."/>
            <person name="Joseph S.S."/>
            <person name="Keenan S."/>
            <person name="Kelly S."/>
            <person name="Kershaw J.K."/>
            <person name="Khan Z."/>
            <person name="Kioschis P."/>
            <person name="Klages S."/>
            <person name="Knights A.J."/>
            <person name="Kosiura A."/>
            <person name="Kovar-Smith C."/>
            <person name="Laird G.K."/>
            <person name="Langford C."/>
            <person name="Lawlor S."/>
            <person name="Leversha M."/>
            <person name="Lewis L."/>
            <person name="Liu W."/>
            <person name="Lloyd C."/>
            <person name="Lloyd D.M."/>
            <person name="Loulseged H."/>
            <person name="Loveland J.E."/>
            <person name="Lovell J.D."/>
            <person name="Lozado R."/>
            <person name="Lu J."/>
            <person name="Lyne R."/>
            <person name="Ma J."/>
            <person name="Maheshwari M."/>
            <person name="Matthews L.H."/>
            <person name="McDowall J."/>
            <person name="McLaren S."/>
            <person name="McMurray A."/>
            <person name="Meidl P."/>
            <person name="Meitinger T."/>
            <person name="Milne S."/>
            <person name="Miner G."/>
            <person name="Mistry S.L."/>
            <person name="Morgan M."/>
            <person name="Morris S."/>
            <person name="Mueller I."/>
            <person name="Mullikin J.C."/>
            <person name="Nguyen N."/>
            <person name="Nordsiek G."/>
            <person name="Nyakatura G."/>
            <person name="O'dell C.N."/>
            <person name="Okwuonu G."/>
            <person name="Palmer S."/>
            <person name="Pandian R."/>
            <person name="Parker D."/>
            <person name="Parrish J."/>
            <person name="Pasternak S."/>
            <person name="Patel D."/>
            <person name="Pearce A.V."/>
            <person name="Pearson D.M."/>
            <person name="Pelan S.E."/>
            <person name="Perez L."/>
            <person name="Porter K.M."/>
            <person name="Ramsey Y."/>
            <person name="Reichwald K."/>
            <person name="Rhodes S."/>
            <person name="Ridler K.A."/>
            <person name="Schlessinger D."/>
            <person name="Schueler M.G."/>
            <person name="Sehra H.K."/>
            <person name="Shaw-Smith C."/>
            <person name="Shen H."/>
            <person name="Sheridan E.M."/>
            <person name="Shownkeen R."/>
            <person name="Skuce C.D."/>
            <person name="Smith M.L."/>
            <person name="Sotheran E.C."/>
            <person name="Steingruber H.E."/>
            <person name="Steward C.A."/>
            <person name="Storey R."/>
            <person name="Swann R.M."/>
            <person name="Swarbreck D."/>
            <person name="Tabor P.E."/>
            <person name="Taudien S."/>
            <person name="Taylor T."/>
            <person name="Teague B."/>
            <person name="Thomas K."/>
            <person name="Thorpe A."/>
            <person name="Timms K."/>
            <person name="Tracey A."/>
            <person name="Trevanion S."/>
            <person name="Tromans A.C."/>
            <person name="d'Urso M."/>
            <person name="Verduzco D."/>
            <person name="Villasana D."/>
            <person name="Waldron L."/>
            <person name="Wall M."/>
            <person name="Wang Q."/>
            <person name="Warren J."/>
            <person name="Warry G.L."/>
            <person name="Wei X."/>
            <person name="West A."/>
            <person name="Whitehead S.L."/>
            <person name="Whiteley M.N."/>
            <person name="Wilkinson J.E."/>
            <person name="Willey D.L."/>
            <person name="Williams G."/>
            <person name="Williams L."/>
            <person name="Williamson A."/>
            <person name="Williamson H."/>
            <person name="Wilming L."/>
            <person name="Woodmansey R.L."/>
            <person name="Wray P.W."/>
            <person name="Yen J."/>
            <person name="Zhang J."/>
            <person name="Zhou J."/>
            <person name="Zoghbi H."/>
            <person name="Zorilla S."/>
            <person name="Buck D."/>
            <person name="Reinhardt R."/>
            <person name="Poustka A."/>
            <person name="Rosenthal A."/>
            <person name="Lehrach H."/>
            <person name="Meindl A."/>
            <person name="Minx P.J."/>
            <person name="Hillier L.W."/>
            <person name="Willard H.F."/>
            <person name="Wilson R.K."/>
            <person name="Waterston R.H."/>
            <person name="Rice C.M."/>
            <person name="Vaudin M."/>
            <person name="Coulson A."/>
            <person name="Nelson D.L."/>
            <person name="Weinstock G."/>
            <person name="Sulston J.E."/>
            <person name="Durbin R.M."/>
            <person name="Hubbard T."/>
            <person name="Gibbs R.A."/>
            <person name="Beck S."/>
            <person name="Rogers J."/>
            <person name="Bentley D.R."/>
        </authorList>
    </citation>
    <scope>NUCLEOTIDE SEQUENCE [LARGE SCALE GENOMIC DNA]</scope>
</reference>
<reference key="5">
    <citation type="journal article" date="2004" name="Genome Res.">
        <title>The status, quality, and expansion of the NIH full-length cDNA project: the Mammalian Gene Collection (MGC).</title>
        <authorList>
            <consortium name="The MGC Project Team"/>
        </authorList>
    </citation>
    <scope>NUCLEOTIDE SEQUENCE [LARGE SCALE MRNA] (ISOFORM 1)</scope>
    <scope>VARIANT ALA-129</scope>
    <source>
        <tissue>Brain</tissue>
    </source>
</reference>
<keyword id="KW-0025">Alternative splicing</keyword>
<keyword id="KW-0217">Developmental protein</keyword>
<keyword id="KW-0221">Differentiation</keyword>
<keyword id="KW-1015">Disulfide bond</keyword>
<keyword id="KW-0325">Glycoprotein</keyword>
<keyword id="KW-0472">Membrane</keyword>
<keyword id="KW-1267">Proteomics identification</keyword>
<keyword id="KW-0675">Receptor</keyword>
<keyword id="KW-1185">Reference proteome</keyword>
<keyword id="KW-0677">Repeat</keyword>
<keyword id="KW-0812">Transmembrane</keyword>
<keyword id="KW-1133">Transmembrane helix</keyword>
<sequence length="297" mass="32759">MDCQENEYWDQWGRCVTCQRCGPGQELSKDCGYGEGGDAYCTACPPRRYKSSWGHHRCQSCITCAVINRVQKVNCTATSNAVCGDCLPRFYRKTRIGGLQDQECIPCTKQTPTSEVQCAFQLSLVEADTPTVPPQEATLVALVSSLLVVFTLAFLGLFFLYCKQFFNRHCQRGGLLQFEADKTAKEESLFPVPPSKETSAESQVSENIFQTQPLNPILEDDCSSTSGFPTQESFTMASCTSESHSHWVHSPIECTELDLQKFSSSASYTGAETLGGNTVESTGDRLELNVPFEVPSP</sequence>
<comment type="function">
    <text evidence="5">Receptor for EDA isoform A2, but not for EDA isoform A1. Mediates the activation of the NF-kappa-B and JNK pathways. Activation seems to be mediated by binding to TRAF3 and TRAF6.</text>
</comment>
<comment type="subunit">
    <text>Associates with TRAF1, TRAF3 and TRAF6.</text>
</comment>
<comment type="interaction">
    <interactant intactId="EBI-526033">
        <id>Q9HAV5</id>
    </interactant>
    <interactant intactId="EBI-3925742">
        <id>Q8TD06</id>
        <label>AGR3</label>
    </interactant>
    <organismsDiffer>false</organismsDiffer>
    <experiments>3</experiments>
</comment>
<comment type="interaction">
    <interactant intactId="EBI-526033">
        <id>Q9HAV5</id>
    </interactant>
    <interactant intactId="EBI-721179">
        <id>P27449</id>
        <label>ATP6V0C</label>
    </interactant>
    <organismsDiffer>false</organismsDiffer>
    <experiments>3</experiments>
</comment>
<comment type="interaction">
    <interactant intactId="EBI-526033">
        <id>Q9HAV5</id>
    </interactant>
    <interactant intactId="EBI-6166686">
        <id>Q96F15</id>
        <label>GIMAP5</label>
    </interactant>
    <organismsDiffer>false</organismsDiffer>
    <experiments>3</experiments>
</comment>
<comment type="interaction">
    <interactant intactId="EBI-526033">
        <id>Q9HAV5</id>
    </interactant>
    <interactant intactId="EBI-10266796">
        <id>Q8N5M9</id>
        <label>JAGN1</label>
    </interactant>
    <organismsDiffer>false</organismsDiffer>
    <experiments>3</experiments>
</comment>
<comment type="interaction">
    <interactant intactId="EBI-526033">
        <id>Q9HAV5</id>
    </interactant>
    <interactant intactId="EBI-3919611">
        <id>Q16617</id>
        <label>NKG7</label>
    </interactant>
    <organismsDiffer>false</organismsDiffer>
    <experiments>3</experiments>
</comment>
<comment type="interaction">
    <interactant intactId="EBI-526033">
        <id>Q9HAV5</id>
    </interactant>
    <interactant intactId="EBI-12188331">
        <id>P60201-2</id>
        <label>PLP1</label>
    </interactant>
    <organismsDiffer>false</organismsDiffer>
    <experiments>3</experiments>
</comment>
<comment type="interaction">
    <interactant intactId="EBI-526033">
        <id>Q9HAV5</id>
    </interactant>
    <interactant intactId="EBI-347996">
        <id>O43765</id>
        <label>SGTA</label>
    </interactant>
    <organismsDiffer>false</organismsDiffer>
    <experiments>3</experiments>
</comment>
<comment type="interaction">
    <interactant intactId="EBI-526033">
        <id>Q9HAV5</id>
    </interactant>
    <interactant intactId="EBI-12200293">
        <id>P0DN84</id>
        <label>STRIT1</label>
    </interactant>
    <organismsDiffer>false</organismsDiffer>
    <experiments>3</experiments>
</comment>
<comment type="interaction">
    <interactant intactId="EBI-526033">
        <id>Q9HAV5</id>
    </interactant>
    <interactant intactId="EBI-17180389">
        <id>E9PQX1</id>
        <label>TMEM262</label>
    </interactant>
    <organismsDiffer>false</organismsDiffer>
    <experiments>3</experiments>
</comment>
<comment type="interaction">
    <interactant intactId="EBI-526033">
        <id>Q9HAV5</id>
    </interactant>
    <interactant intactId="EBI-357631">
        <id>Q13114</id>
        <label>TRAF3</label>
    </interactant>
    <organismsDiffer>false</organismsDiffer>
    <experiments>3</experiments>
</comment>
<comment type="interaction">
    <interactant intactId="EBI-526033">
        <id>Q9HAV5</id>
    </interactant>
    <interactant intactId="EBI-359276">
        <id>Q9Y4K3</id>
        <label>TRAF6</label>
    </interactant>
    <organismsDiffer>false</organismsDiffer>
    <experiments>3</experiments>
</comment>
<comment type="subcellular location">
    <subcellularLocation>
        <location>Membrane</location>
        <topology>Single-pass type III membrane protein</topology>
    </subcellularLocation>
</comment>
<comment type="alternative products">
    <event type="alternative splicing"/>
    <isoform>
        <id>Q9HAV5-1</id>
        <name>1</name>
        <sequence type="displayed"/>
    </isoform>
    <isoform>
        <id>Q9HAV5-2</id>
        <name>2</name>
        <name>Long</name>
        <sequence type="described" ref="VSP_011568"/>
    </isoform>
    <isoform>
        <id>Q9HAV5-3</id>
        <name>3</name>
        <sequence type="described" ref="VSP_011569"/>
    </isoform>
</comment>
<organism>
    <name type="scientific">Homo sapiens</name>
    <name type="common">Human</name>
    <dbReference type="NCBI Taxonomy" id="9606"/>
    <lineage>
        <taxon>Eukaryota</taxon>
        <taxon>Metazoa</taxon>
        <taxon>Chordata</taxon>
        <taxon>Craniata</taxon>
        <taxon>Vertebrata</taxon>
        <taxon>Euteleostomi</taxon>
        <taxon>Mammalia</taxon>
        <taxon>Eutheria</taxon>
        <taxon>Euarchontoglires</taxon>
        <taxon>Primates</taxon>
        <taxon>Haplorrhini</taxon>
        <taxon>Catarrhini</taxon>
        <taxon>Hominidae</taxon>
        <taxon>Homo</taxon>
    </lineage>
</organism>
<proteinExistence type="evidence at protein level"/>